<feature type="chain" id="PRO_0000176019" description="UPF0178 protein VC_0881">
    <location>
        <begin position="1"/>
        <end position="149"/>
    </location>
</feature>
<sequence length="149" mass="16454">MKIWVDADACPKVIRETLIRAAERTGVECTFVANHLIPLPKRDNIRALQVSSGFDIADNEIVRRTEAGDLVITADIPLADEVISKGGLALNPRGELYTKETIKARLNIRDFMDTMRASGIQTGGPAALSQTERREFANHLDRILAKRTG</sequence>
<reference key="1">
    <citation type="journal article" date="2000" name="Nature">
        <title>DNA sequence of both chromosomes of the cholera pathogen Vibrio cholerae.</title>
        <authorList>
            <person name="Heidelberg J.F."/>
            <person name="Eisen J.A."/>
            <person name="Nelson W.C."/>
            <person name="Clayton R.A."/>
            <person name="Gwinn M.L."/>
            <person name="Dodson R.J."/>
            <person name="Haft D.H."/>
            <person name="Hickey E.K."/>
            <person name="Peterson J.D."/>
            <person name="Umayam L.A."/>
            <person name="Gill S.R."/>
            <person name="Nelson K.E."/>
            <person name="Read T.D."/>
            <person name="Tettelin H."/>
            <person name="Richardson D.L."/>
            <person name="Ermolaeva M.D."/>
            <person name="Vamathevan J.J."/>
            <person name="Bass S."/>
            <person name="Qin H."/>
            <person name="Dragoi I."/>
            <person name="Sellers P."/>
            <person name="McDonald L.A."/>
            <person name="Utterback T.R."/>
            <person name="Fleischmann R.D."/>
            <person name="Nierman W.C."/>
            <person name="White O."/>
            <person name="Salzberg S.L."/>
            <person name="Smith H.O."/>
            <person name="Colwell R.R."/>
            <person name="Mekalanos J.J."/>
            <person name="Venter J.C."/>
            <person name="Fraser C.M."/>
        </authorList>
    </citation>
    <scope>NUCLEOTIDE SEQUENCE [LARGE SCALE GENOMIC DNA]</scope>
    <source>
        <strain>ATCC 39315 / El Tor Inaba N16961</strain>
    </source>
</reference>
<evidence type="ECO:0000305" key="1"/>
<name>Y881_VIBCH</name>
<accession>Q9KTM1</accession>
<dbReference type="EMBL" id="AE003852">
    <property type="protein sequence ID" value="AAF94043.1"/>
    <property type="molecule type" value="Genomic_DNA"/>
</dbReference>
<dbReference type="PIR" id="F82269">
    <property type="entry name" value="F82269"/>
</dbReference>
<dbReference type="RefSeq" id="NP_230528.1">
    <property type="nucleotide sequence ID" value="NC_002505.1"/>
</dbReference>
<dbReference type="RefSeq" id="WP_000708225.1">
    <property type="nucleotide sequence ID" value="NZ_LT906614.1"/>
</dbReference>
<dbReference type="DNASU" id="2614110"/>
<dbReference type="EnsemblBacteria" id="AAF94043">
    <property type="protein sequence ID" value="AAF94043"/>
    <property type="gene ID" value="VC_0881"/>
</dbReference>
<dbReference type="KEGG" id="vch:VC_0881"/>
<dbReference type="PATRIC" id="fig|243277.26.peg.839"/>
<dbReference type="eggNOG" id="COG1671">
    <property type="taxonomic scope" value="Bacteria"/>
</dbReference>
<dbReference type="HOGENOM" id="CLU_106619_2_1_6"/>
<dbReference type="Proteomes" id="UP000000584">
    <property type="component" value="Chromosome 1"/>
</dbReference>
<dbReference type="CDD" id="cd18720">
    <property type="entry name" value="PIN_YqxD-like"/>
    <property type="match status" value="1"/>
</dbReference>
<dbReference type="HAMAP" id="MF_00489">
    <property type="entry name" value="UPF0178"/>
    <property type="match status" value="1"/>
</dbReference>
<dbReference type="InterPro" id="IPR003791">
    <property type="entry name" value="UPF0178"/>
</dbReference>
<dbReference type="NCBIfam" id="NF001095">
    <property type="entry name" value="PRK00124.1"/>
    <property type="match status" value="1"/>
</dbReference>
<dbReference type="PANTHER" id="PTHR35146">
    <property type="entry name" value="UPF0178 PROTEIN YAII"/>
    <property type="match status" value="1"/>
</dbReference>
<dbReference type="PANTHER" id="PTHR35146:SF1">
    <property type="entry name" value="UPF0178 PROTEIN YAII"/>
    <property type="match status" value="1"/>
</dbReference>
<dbReference type="Pfam" id="PF02639">
    <property type="entry name" value="DUF188"/>
    <property type="match status" value="1"/>
</dbReference>
<comment type="similarity">
    <text evidence="1">Belongs to the UPF0178 family.</text>
</comment>
<protein>
    <recommendedName>
        <fullName>UPF0178 protein VC_0881</fullName>
    </recommendedName>
</protein>
<proteinExistence type="inferred from homology"/>
<gene>
    <name type="ordered locus">VC_0881</name>
</gene>
<keyword id="KW-1185">Reference proteome</keyword>
<organism>
    <name type="scientific">Vibrio cholerae serotype O1 (strain ATCC 39315 / El Tor Inaba N16961)</name>
    <dbReference type="NCBI Taxonomy" id="243277"/>
    <lineage>
        <taxon>Bacteria</taxon>
        <taxon>Pseudomonadati</taxon>
        <taxon>Pseudomonadota</taxon>
        <taxon>Gammaproteobacteria</taxon>
        <taxon>Vibrionales</taxon>
        <taxon>Vibrionaceae</taxon>
        <taxon>Vibrio</taxon>
    </lineage>
</organism>